<sequence>MPPQPPPAASASASAPDPAVPAWLRGLPRAPEYRPTESEFADPIAFLSRVEREAAAYGICKVIPPHPRPSRRFVFAHLNRSLVSSCDAPAPSPAAASDSSIPPSSSSPPPVSAAVFTTRHQELGNPRRGRPTPQVLKQVWQSGERYTLDQFESKSRAFSKTHLAGLHEPTALAVESLFWKASADRPIYIEYANDVPGSGFAAPVQLQRKKKQKRETAPMDEWEKSSGWRLSNSPWNLQAIARAPGSLTRFMPDDVPGVTSPMVYIGMLFSWFAWHVEDHDLHSLNFLHTGAPKTWYAVPGDRAVELEEVIRVHGYGGNTDRIASLAVLGEKTTLMSPEVLIDNGVPCCRLVQYPGEFVVTFPRAYHVGFSHGFNCGEAANFATPQWLKFAKEAAVRRAVMNYLPMLSHQQLLYLLAVSFISRNPRELLSGIRTSRLRDRKKEDRELLVKQEFLQDMISENELICSFLGKKSVDNVVLWEPDLLPSLTALHPCSSCSKAPEKKGEDGPRIGSTQSSSKDDSSSDGTACMTGTQSKGLSMDSKQAPEGEKLDTDDGDDLPFDLSIDSGSLTCVACGILGYPFMAILQPSRKALEEISLVDKERYKLSCEKEICSNVLPCSPNDGSSGCPLIANRSSSPVENANLSHQDVKPIRSDISLMGKEFNGTLGKHIGTSCSCSSENTIHPYGDTETPEKKIPSDCPGSELSKQSGRGDVNVPDVEGSEETISWNTGCAFARPRIFCLQHALEIEELLASKGGVHALIICHADYVKLKALAISIAEEIEFQFDYKDVALANASKSNLHLINISIDDEGYEEEGTDWTSRMGLNLKHSSKIRKETPESQEQPPLSFWGLFSKPSPISVVSNLKWLCRKARTPYKVIGYASSPDVVATPDKVKPAVTKTQIDTSGNAHENIGSEQTLQQDCVLQESNDVADMCKRPKVNDQDGHSLINIPIAVAEYPMMHQVCERPVSVSACDDPICSFDSQDSPTTVAVSAGKPTREQCGAESTELSTVKQFLDNGLIAEGGSMNFISNHEHLESDNATSVCKDEQLQVQQDQLAMVLCNNPNTELVAGELHGGAASSTLENEDSCGNTSYCSDTVLKNSEPDTDDQPETCDRSVVLVTPKSSCDQMISSSDRSCSLTLDCPVSTDAAFSSEKLSMAHDLMGSELQAVHNSKAEVVASLTDVKGAKLNSIHTTQLPHESPSSDFIISEGAQSASTTAIPRKNGTSMHTESNSIDILLGVLADESKVSSGKDEVGKASLTLMTLAGNDQSADDVTQDEVAEITDPSHGFCSSDIVSRSIGSSNRTNIICYARRKHKRKSGSEFNINSPQSLGSFVRSPCESLRPRTRPAIVEDMTNETKTAEASTANKRKKAKVEAFQCDIEFCDMTFETKAELRAHQRNICTDESCGKRFSSHKYLKRHQCVHRDERPFKCPWDGCPMTFKWLWAQTEHIRVHTGERPYKCSAPDCGQSFRYVSDYSRHRKKFNHY</sequence>
<keyword id="KW-0156">Chromatin regulator</keyword>
<keyword id="KW-0223">Dioxygenase</keyword>
<keyword id="KW-0287">Flowering</keyword>
<keyword id="KW-0408">Iron</keyword>
<keyword id="KW-0479">Metal-binding</keyword>
<keyword id="KW-0539">Nucleus</keyword>
<keyword id="KW-0560">Oxidoreductase</keyword>
<keyword id="KW-1185">Reference proteome</keyword>
<keyword id="KW-0677">Repeat</keyword>
<keyword id="KW-0804">Transcription</keyword>
<keyword id="KW-0805">Transcription regulation</keyword>
<keyword id="KW-0862">Zinc</keyword>
<keyword id="KW-0863">Zinc-finger</keyword>
<protein>
    <recommendedName>
        <fullName>Probable lysine-specific demethylase SE14</fullName>
        <ecNumber>1.14.11.-</ecNumber>
    </recommendedName>
    <alternativeName>
        <fullName>Protein PHOTOPERIOD SENSITIVITY 14</fullName>
    </alternativeName>
</protein>
<reference key="1">
    <citation type="journal article" date="2005" name="Genome Res.">
        <title>Sequence, annotation, and analysis of synteny between rice chromosome 3 and diverged grass species.</title>
        <authorList>
            <consortium name="The rice chromosome 3 sequencing consortium"/>
            <person name="Buell C.R."/>
            <person name="Yuan Q."/>
            <person name="Ouyang S."/>
            <person name="Liu J."/>
            <person name="Zhu W."/>
            <person name="Wang A."/>
            <person name="Maiti R."/>
            <person name="Haas B."/>
            <person name="Wortman J."/>
            <person name="Pertea M."/>
            <person name="Jones K.M."/>
            <person name="Kim M."/>
            <person name="Overton L."/>
            <person name="Tsitrin T."/>
            <person name="Fadrosh D."/>
            <person name="Bera J."/>
            <person name="Weaver B."/>
            <person name="Jin S."/>
            <person name="Johri S."/>
            <person name="Reardon M."/>
            <person name="Webb K."/>
            <person name="Hill J."/>
            <person name="Moffat K."/>
            <person name="Tallon L."/>
            <person name="Van Aken S."/>
            <person name="Lewis M."/>
            <person name="Utterback T."/>
            <person name="Feldblyum T."/>
            <person name="Zismann V."/>
            <person name="Iobst S."/>
            <person name="Hsiao J."/>
            <person name="de Vazeille A.R."/>
            <person name="Salzberg S.L."/>
            <person name="White O."/>
            <person name="Fraser C.M."/>
            <person name="Yu Y."/>
            <person name="Kim H."/>
            <person name="Rambo T."/>
            <person name="Currie J."/>
            <person name="Collura K."/>
            <person name="Kernodle-Thompson S."/>
            <person name="Wei F."/>
            <person name="Kudrna K."/>
            <person name="Ammiraju J.S.S."/>
            <person name="Luo M."/>
            <person name="Goicoechea J.L."/>
            <person name="Wing R.A."/>
            <person name="Henry D."/>
            <person name="Oates R."/>
            <person name="Palmer M."/>
            <person name="Pries G."/>
            <person name="Saski C."/>
            <person name="Simmons J."/>
            <person name="Soderlund C."/>
            <person name="Nelson W."/>
            <person name="de la Bastide M."/>
            <person name="Spiegel L."/>
            <person name="Nascimento L."/>
            <person name="Huang E."/>
            <person name="Preston R."/>
            <person name="Zutavern T."/>
            <person name="Palmer L."/>
            <person name="O'Shaughnessy A."/>
            <person name="Dike S."/>
            <person name="McCombie W.R."/>
            <person name="Minx P."/>
            <person name="Cordum H."/>
            <person name="Wilson R."/>
            <person name="Jin W."/>
            <person name="Lee H.R."/>
            <person name="Jiang J."/>
            <person name="Jackson S."/>
        </authorList>
    </citation>
    <scope>NUCLEOTIDE SEQUENCE [LARGE SCALE GENOMIC DNA]</scope>
    <source>
        <strain>cv. Nipponbare</strain>
    </source>
</reference>
<reference key="2">
    <citation type="journal article" date="2005" name="Nature">
        <title>The map-based sequence of the rice genome.</title>
        <authorList>
            <consortium name="International rice genome sequencing project (IRGSP)"/>
        </authorList>
    </citation>
    <scope>NUCLEOTIDE SEQUENCE [LARGE SCALE GENOMIC DNA]</scope>
    <source>
        <strain>cv. Nipponbare</strain>
    </source>
</reference>
<reference key="3">
    <citation type="journal article" date="2013" name="Rice">
        <title>Improvement of the Oryza sativa Nipponbare reference genome using next generation sequence and optical map data.</title>
        <authorList>
            <person name="Kawahara Y."/>
            <person name="de la Bastide M."/>
            <person name="Hamilton J.P."/>
            <person name="Kanamori H."/>
            <person name="McCombie W.R."/>
            <person name="Ouyang S."/>
            <person name="Schwartz D.C."/>
            <person name="Tanaka T."/>
            <person name="Wu J."/>
            <person name="Zhou S."/>
            <person name="Childs K.L."/>
            <person name="Davidson R.M."/>
            <person name="Lin H."/>
            <person name="Quesada-Ocampo L."/>
            <person name="Vaillancourt B."/>
            <person name="Sakai H."/>
            <person name="Lee S.S."/>
            <person name="Kim J."/>
            <person name="Numa H."/>
            <person name="Itoh T."/>
            <person name="Buell C.R."/>
            <person name="Matsumoto T."/>
        </authorList>
    </citation>
    <scope>GENOME REANNOTATION</scope>
    <source>
        <strain>cv. Nipponbare</strain>
    </source>
</reference>
<reference key="4">
    <citation type="journal article" date="2014" name="PLoS ONE">
        <title>Se14, encoding a JmjC domain-containing protein, plays key roles in long-day suppression of rice flowering through the demethylation of H3K4me3 of RFT1.</title>
        <authorList>
            <person name="Yokoo T."/>
            <person name="Saito H."/>
            <person name="Yoshitake Y."/>
            <person name="Xu Q."/>
            <person name="Asami T."/>
            <person name="Tsukiyama T."/>
            <person name="Teraishi M."/>
            <person name="Okumoto Y."/>
            <person name="Tanisaka T."/>
        </authorList>
    </citation>
    <scope>FUNCTION</scope>
    <scope>DISRUPTION PHENOTYPE</scope>
    <source>
        <strain>cv. Gimbozu</strain>
    </source>
</reference>
<organism>
    <name type="scientific">Oryza sativa subsp. japonica</name>
    <name type="common">Rice</name>
    <dbReference type="NCBI Taxonomy" id="39947"/>
    <lineage>
        <taxon>Eukaryota</taxon>
        <taxon>Viridiplantae</taxon>
        <taxon>Streptophyta</taxon>
        <taxon>Embryophyta</taxon>
        <taxon>Tracheophyta</taxon>
        <taxon>Spermatophyta</taxon>
        <taxon>Magnoliopsida</taxon>
        <taxon>Liliopsida</taxon>
        <taxon>Poales</taxon>
        <taxon>Poaceae</taxon>
        <taxon>BOP clade</taxon>
        <taxon>Oryzoideae</taxon>
        <taxon>Oryzeae</taxon>
        <taxon>Oryzinae</taxon>
        <taxon>Oryza</taxon>
        <taxon>Oryza sativa</taxon>
    </lineage>
</organism>
<dbReference type="EC" id="1.14.11.-"/>
<dbReference type="EMBL" id="DP000009">
    <property type="protein sequence ID" value="ABF94013.1"/>
    <property type="status" value="ALT_SEQ"/>
    <property type="molecule type" value="Genomic_DNA"/>
</dbReference>
<dbReference type="EMBL" id="AP008209">
    <property type="protein sequence ID" value="BAH91998.1"/>
    <property type="status" value="ALT_SEQ"/>
    <property type="molecule type" value="Genomic_DNA"/>
</dbReference>
<dbReference type="EMBL" id="AP014959">
    <property type="status" value="NOT_ANNOTATED_CDS"/>
    <property type="molecule type" value="Genomic_DNA"/>
</dbReference>
<dbReference type="SMR" id="Q10RP4"/>
<dbReference type="FunCoup" id="Q10RP4">
    <property type="interactions" value="1735"/>
</dbReference>
<dbReference type="STRING" id="39947.Q10RP4"/>
<dbReference type="PaxDb" id="39947-Q10RP4"/>
<dbReference type="EnsemblPlants" id="Os03t0151300-02">
    <property type="protein sequence ID" value="Os03t0151300-02"/>
    <property type="gene ID" value="Os03g0151300"/>
</dbReference>
<dbReference type="Gramene" id="Os03t0151300-02">
    <property type="protein sequence ID" value="Os03t0151300-02"/>
    <property type="gene ID" value="Os03g0151300"/>
</dbReference>
<dbReference type="KEGG" id="dosa:Os03g0151300"/>
<dbReference type="KEGG" id="osa:9268736"/>
<dbReference type="eggNOG" id="KOG1246">
    <property type="taxonomic scope" value="Eukaryota"/>
</dbReference>
<dbReference type="HOGENOM" id="CLU_587423_0_0_1"/>
<dbReference type="InParanoid" id="Q10RP4"/>
<dbReference type="OrthoDB" id="9547406at2759"/>
<dbReference type="BRENDA" id="1.14.11.67">
    <property type="organism ID" value="8948"/>
</dbReference>
<dbReference type="Proteomes" id="UP000000763">
    <property type="component" value="Chromosome 3"/>
</dbReference>
<dbReference type="Proteomes" id="UP000059680">
    <property type="component" value="Chromosome 3"/>
</dbReference>
<dbReference type="GO" id="GO:0000785">
    <property type="term" value="C:chromatin"/>
    <property type="evidence" value="ECO:0000318"/>
    <property type="project" value="GO_Central"/>
</dbReference>
<dbReference type="GO" id="GO:0005634">
    <property type="term" value="C:nucleus"/>
    <property type="evidence" value="ECO:0000318"/>
    <property type="project" value="GO_Central"/>
</dbReference>
<dbReference type="GO" id="GO:0032452">
    <property type="term" value="F:histone demethylase activity"/>
    <property type="evidence" value="ECO:0000315"/>
    <property type="project" value="UniProtKB"/>
</dbReference>
<dbReference type="GO" id="GO:0034647">
    <property type="term" value="F:histone H3K4me/H3K4me2/H3K4me3 demethylase activity"/>
    <property type="evidence" value="ECO:0000318"/>
    <property type="project" value="GO_Central"/>
</dbReference>
<dbReference type="GO" id="GO:0008270">
    <property type="term" value="F:zinc ion binding"/>
    <property type="evidence" value="ECO:0007669"/>
    <property type="project" value="UniProtKB-KW"/>
</dbReference>
<dbReference type="GO" id="GO:0006338">
    <property type="term" value="P:chromatin remodeling"/>
    <property type="evidence" value="ECO:0000318"/>
    <property type="project" value="GO_Central"/>
</dbReference>
<dbReference type="GO" id="GO:0009908">
    <property type="term" value="P:flower development"/>
    <property type="evidence" value="ECO:0007669"/>
    <property type="project" value="UniProtKB-KW"/>
</dbReference>
<dbReference type="GO" id="GO:0045814">
    <property type="term" value="P:negative regulation of gene expression, epigenetic"/>
    <property type="evidence" value="ECO:0000315"/>
    <property type="project" value="UniProtKB"/>
</dbReference>
<dbReference type="GO" id="GO:0048579">
    <property type="term" value="P:negative regulation of long-day photoperiodism, flowering"/>
    <property type="evidence" value="ECO:0000315"/>
    <property type="project" value="UniProtKB"/>
</dbReference>
<dbReference type="GO" id="GO:0010468">
    <property type="term" value="P:regulation of gene expression"/>
    <property type="evidence" value="ECO:0000318"/>
    <property type="project" value="GO_Central"/>
</dbReference>
<dbReference type="FunFam" id="2.60.120.650:FF:000023">
    <property type="entry name" value="Probable lysine-specific demethylase ELF6"/>
    <property type="match status" value="1"/>
</dbReference>
<dbReference type="FunFam" id="3.30.160.60:FF:000747">
    <property type="entry name" value="Probable lysine-specific demethylase ELF6"/>
    <property type="match status" value="1"/>
</dbReference>
<dbReference type="Gene3D" id="3.30.160.60">
    <property type="entry name" value="Classic Zinc Finger"/>
    <property type="match status" value="3"/>
</dbReference>
<dbReference type="Gene3D" id="2.60.120.650">
    <property type="entry name" value="Cupin"/>
    <property type="match status" value="1"/>
</dbReference>
<dbReference type="InterPro" id="IPR003347">
    <property type="entry name" value="JmjC_dom"/>
</dbReference>
<dbReference type="InterPro" id="IPR003349">
    <property type="entry name" value="JmjN"/>
</dbReference>
<dbReference type="InterPro" id="IPR036236">
    <property type="entry name" value="Znf_C2H2_sf"/>
</dbReference>
<dbReference type="InterPro" id="IPR013087">
    <property type="entry name" value="Znf_C2H2_type"/>
</dbReference>
<dbReference type="PANTHER" id="PTHR10694">
    <property type="entry name" value="LYSINE-SPECIFIC DEMETHYLASE"/>
    <property type="match status" value="1"/>
</dbReference>
<dbReference type="PANTHER" id="PTHR10694:SF45">
    <property type="entry name" value="LYSINE-SPECIFIC DEMETHYLASE ELF6"/>
    <property type="match status" value="1"/>
</dbReference>
<dbReference type="Pfam" id="PF02373">
    <property type="entry name" value="JmjC"/>
    <property type="match status" value="1"/>
</dbReference>
<dbReference type="Pfam" id="PF02375">
    <property type="entry name" value="JmjN"/>
    <property type="match status" value="1"/>
</dbReference>
<dbReference type="SMART" id="SM00558">
    <property type="entry name" value="JmjC"/>
    <property type="match status" value="1"/>
</dbReference>
<dbReference type="SMART" id="SM00545">
    <property type="entry name" value="JmjN"/>
    <property type="match status" value="1"/>
</dbReference>
<dbReference type="SMART" id="SM00355">
    <property type="entry name" value="ZnF_C2H2"/>
    <property type="match status" value="4"/>
</dbReference>
<dbReference type="SUPFAM" id="SSF57667">
    <property type="entry name" value="beta-beta-alpha zinc fingers"/>
    <property type="match status" value="2"/>
</dbReference>
<dbReference type="SUPFAM" id="SSF51197">
    <property type="entry name" value="Clavaminate synthase-like"/>
    <property type="match status" value="1"/>
</dbReference>
<dbReference type="PROSITE" id="PS51184">
    <property type="entry name" value="JMJC"/>
    <property type="match status" value="1"/>
</dbReference>
<dbReference type="PROSITE" id="PS51183">
    <property type="entry name" value="JMJN"/>
    <property type="match status" value="1"/>
</dbReference>
<dbReference type="PROSITE" id="PS00028">
    <property type="entry name" value="ZINC_FINGER_C2H2_1"/>
    <property type="match status" value="3"/>
</dbReference>
<dbReference type="PROSITE" id="PS50157">
    <property type="entry name" value="ZINC_FINGER_C2H2_2"/>
    <property type="match status" value="4"/>
</dbReference>
<name>SE14_ORYSJ</name>
<proteinExistence type="inferred from homology"/>
<comment type="function">
    <text evidence="6">Histone demethylase that demethylates 'Lys-4' (H3K4me) of histone H3. Involved in the control of flowering time. Has a suppressive effect on floral transition under long day conditions through the demethylation of H3K4me3 in the promoter region of the flower-promoting signal HD3B/RFT1.</text>
</comment>
<comment type="cofactor">
    <cofactor evidence="1">
        <name>Fe(2+)</name>
        <dbReference type="ChEBI" id="CHEBI:29033"/>
    </cofactor>
    <text evidence="1">Binds 1 Fe(2+) ion per subunit.</text>
</comment>
<comment type="subcellular location">
    <subcellularLocation>
        <location evidence="3">Nucleus</location>
    </subcellularLocation>
</comment>
<comment type="disruption phenotype">
    <text evidence="6">Early flowering.</text>
</comment>
<comment type="sequence caution" evidence="7">
    <conflict type="erroneous gene model prediction">
        <sequence resource="EMBL-CDS" id="ABF94013"/>
    </conflict>
</comment>
<comment type="sequence caution" evidence="7">
    <conflict type="erroneous gene model prediction">
        <sequence resource="EMBL-CDS" id="BAH91998"/>
    </conflict>
</comment>
<evidence type="ECO:0000250" key="1">
    <source>
        <dbReference type="UniProtKB" id="Q53WJ1"/>
    </source>
</evidence>
<evidence type="ECO:0000255" key="2">
    <source>
        <dbReference type="PROSITE-ProRule" id="PRU00042"/>
    </source>
</evidence>
<evidence type="ECO:0000255" key="3">
    <source>
        <dbReference type="PROSITE-ProRule" id="PRU00537"/>
    </source>
</evidence>
<evidence type="ECO:0000255" key="4">
    <source>
        <dbReference type="PROSITE-ProRule" id="PRU00538"/>
    </source>
</evidence>
<evidence type="ECO:0000256" key="5">
    <source>
        <dbReference type="SAM" id="MobiDB-lite"/>
    </source>
</evidence>
<evidence type="ECO:0000269" key="6">
    <source>
    </source>
</evidence>
<evidence type="ECO:0000305" key="7"/>
<feature type="chain" id="PRO_0000430003" description="Probable lysine-specific demethylase SE14">
    <location>
        <begin position="1"/>
        <end position="1487"/>
    </location>
</feature>
<feature type="domain" description="JmjN" evidence="3">
    <location>
        <begin position="30"/>
        <end position="71"/>
    </location>
</feature>
<feature type="domain" description="JmjC" evidence="4">
    <location>
        <begin position="232"/>
        <end position="398"/>
    </location>
</feature>
<feature type="zinc finger region" description="C2H2-type 1; degenerate" evidence="2">
    <location>
        <begin position="1377"/>
        <end position="1400"/>
    </location>
</feature>
<feature type="zinc finger region" description="C2H2-type 2" evidence="2">
    <location>
        <begin position="1400"/>
        <end position="1424"/>
    </location>
</feature>
<feature type="zinc finger region" description="C2H2-type 3" evidence="2">
    <location>
        <begin position="1430"/>
        <end position="1454"/>
    </location>
</feature>
<feature type="zinc finger region" description="C2H2-type 4" evidence="2">
    <location>
        <begin position="1460"/>
        <end position="1486"/>
    </location>
</feature>
<feature type="region of interest" description="Disordered" evidence="5">
    <location>
        <begin position="1"/>
        <end position="23"/>
    </location>
</feature>
<feature type="region of interest" description="Disordered" evidence="5">
    <location>
        <begin position="86"/>
        <end position="113"/>
    </location>
</feature>
<feature type="region of interest" description="Disordered" evidence="5">
    <location>
        <begin position="494"/>
        <end position="555"/>
    </location>
</feature>
<feature type="region of interest" description="Disordered" evidence="5">
    <location>
        <begin position="684"/>
        <end position="718"/>
    </location>
</feature>
<feature type="compositionally biased region" description="Low complexity" evidence="5">
    <location>
        <begin position="9"/>
        <end position="22"/>
    </location>
</feature>
<feature type="compositionally biased region" description="Low complexity" evidence="5">
    <location>
        <begin position="86"/>
        <end position="104"/>
    </location>
</feature>
<feature type="compositionally biased region" description="Basic and acidic residues" evidence="5">
    <location>
        <begin position="498"/>
        <end position="507"/>
    </location>
</feature>
<feature type="compositionally biased region" description="Basic and acidic residues" evidence="5">
    <location>
        <begin position="542"/>
        <end position="551"/>
    </location>
</feature>
<feature type="binding site" evidence="4">
    <location>
        <position position="275"/>
    </location>
    <ligand>
        <name>Fe cation</name>
        <dbReference type="ChEBI" id="CHEBI:24875"/>
        <note>catalytic</note>
    </ligand>
</feature>
<feature type="binding site" evidence="4">
    <location>
        <position position="277"/>
    </location>
    <ligand>
        <name>Fe cation</name>
        <dbReference type="ChEBI" id="CHEBI:24875"/>
        <note>catalytic</note>
    </ligand>
</feature>
<feature type="binding site" evidence="4">
    <location>
        <position position="366"/>
    </location>
    <ligand>
        <name>Fe cation</name>
        <dbReference type="ChEBI" id="CHEBI:24875"/>
        <note>catalytic</note>
    </ligand>
</feature>
<gene>
    <name type="primary">SE14</name>
    <name type="ordered locus">Os03g0151300</name>
    <name type="ordered locus">LOC_Os03g05690</name>
</gene>
<accession>Q10RP4</accession>
<accession>C7IZW4</accession>